<feature type="chain" id="PRO_0000232739" description="Membrane-associated phosphatidylinositol transfer protein 1">
    <location>
        <begin position="1"/>
        <end position="1243"/>
    </location>
</feature>
<feature type="domain" description="DDHD" evidence="4">
    <location>
        <begin position="684"/>
        <end position="878"/>
    </location>
</feature>
<feature type="region of interest" description="Disordered" evidence="5">
    <location>
        <begin position="259"/>
        <end position="330"/>
    </location>
</feature>
<feature type="region of interest" description="Disordered" evidence="5">
    <location>
        <begin position="581"/>
        <end position="679"/>
    </location>
</feature>
<feature type="region of interest" description="Disordered" evidence="5">
    <location>
        <begin position="1206"/>
        <end position="1243"/>
    </location>
</feature>
<feature type="compositionally biased region" description="Polar residues" evidence="5">
    <location>
        <begin position="271"/>
        <end position="283"/>
    </location>
</feature>
<feature type="compositionally biased region" description="Low complexity" evidence="5">
    <location>
        <begin position="299"/>
        <end position="319"/>
    </location>
</feature>
<feature type="compositionally biased region" description="Low complexity" evidence="5">
    <location>
        <begin position="581"/>
        <end position="593"/>
    </location>
</feature>
<feature type="compositionally biased region" description="Polar residues" evidence="5">
    <location>
        <begin position="643"/>
        <end position="658"/>
    </location>
</feature>
<feature type="modified residue" description="Phosphothreonine" evidence="2">
    <location>
        <position position="59"/>
    </location>
</feature>
<feature type="modified residue" description="Phosphothreonine" evidence="10">
    <location>
        <position position="282"/>
    </location>
</feature>
<feature type="modified residue" description="Phosphothreonine" evidence="10">
    <location>
        <position position="287"/>
    </location>
</feature>
<feature type="modified residue" description="Phosphoserine" evidence="10">
    <location>
        <position position="300"/>
    </location>
</feature>
<feature type="modified residue" description="Phosphoserine" evidence="10">
    <location>
        <position position="304"/>
    </location>
</feature>
<feature type="modified residue" description="Phosphoserine" evidence="10">
    <location>
        <position position="319"/>
    </location>
</feature>
<feature type="modified residue" description="Phosphoserine" evidence="10">
    <location>
        <position position="326"/>
    </location>
</feature>
<feature type="modified residue" description="Phosphoserine" evidence="10">
    <location>
        <position position="329"/>
    </location>
</feature>
<feature type="modified residue" description="Phosphoserine" evidence="3">
    <location>
        <position position="342"/>
    </location>
</feature>
<feature type="modified residue" description="Phosphoserine" evidence="3">
    <location>
        <position position="345"/>
    </location>
</feature>
<feature type="modified residue" description="Phosphoserine" evidence="3">
    <location>
        <position position="346"/>
    </location>
</feature>
<feature type="modified residue" description="Phosphoserine" evidence="10">
    <location>
        <position position="373"/>
    </location>
</feature>
<feature type="modified residue" description="Phosphoserine; by CDK1" evidence="2">
    <location>
        <position position="382"/>
    </location>
</feature>
<feature type="modified residue" description="Phosphoserine" evidence="10">
    <location>
        <position position="593"/>
    </location>
</feature>
<feature type="modified residue" description="Phosphoserine" evidence="2">
    <location>
        <position position="600"/>
    </location>
</feature>
<feature type="modified residue" description="Phosphoserine" evidence="2">
    <location>
        <position position="621"/>
    </location>
</feature>
<feature type="modified residue" description="Phosphoserine" evidence="2">
    <location>
        <position position="895"/>
    </location>
</feature>
<feature type="modified residue" description="Omega-N-methylarginine" evidence="11">
    <location>
        <position position="1210"/>
    </location>
</feature>
<feature type="modified residue" description="Omega-N-methylarginine" evidence="11">
    <location>
        <position position="1217"/>
    </location>
</feature>
<feature type="modified residue" description="Phosphoserine" evidence="2">
    <location>
        <position position="1236"/>
    </location>
</feature>
<dbReference type="EMBL" id="AF006467">
    <property type="protein sequence ID" value="AAB84393.1"/>
    <property type="molecule type" value="mRNA"/>
</dbReference>
<dbReference type="EMBL" id="Y08922">
    <property type="protein sequence ID" value="CAA70127.1"/>
    <property type="molecule type" value="mRNA"/>
</dbReference>
<dbReference type="EMBL" id="BC044893">
    <property type="protein sequence ID" value="AAH44893.1"/>
    <property type="molecule type" value="mRNA"/>
</dbReference>
<dbReference type="EMBL" id="BC048150">
    <property type="protein sequence ID" value="AAH48150.1"/>
    <property type="molecule type" value="mRNA"/>
</dbReference>
<dbReference type="CCDS" id="CCDS37883.1"/>
<dbReference type="PIR" id="JC5615">
    <property type="entry name" value="JC5615"/>
</dbReference>
<dbReference type="RefSeq" id="NP_032877.1">
    <property type="nucleotide sequence ID" value="NM_008851.4"/>
</dbReference>
<dbReference type="SMR" id="O35954"/>
<dbReference type="BioGRID" id="202185">
    <property type="interactions" value="7"/>
</dbReference>
<dbReference type="FunCoup" id="O35954">
    <property type="interactions" value="1717"/>
</dbReference>
<dbReference type="IntAct" id="O35954">
    <property type="interactions" value="3"/>
</dbReference>
<dbReference type="MINT" id="O35954"/>
<dbReference type="STRING" id="10090.ENSMUSP00000097599"/>
<dbReference type="GlyGen" id="O35954">
    <property type="glycosylation" value="3 sites, 1 N-linked glycan (1 site), 1 O-linked glycan (2 sites)"/>
</dbReference>
<dbReference type="iPTMnet" id="O35954"/>
<dbReference type="PhosphoSitePlus" id="O35954"/>
<dbReference type="SwissPalm" id="O35954"/>
<dbReference type="jPOST" id="O35954"/>
<dbReference type="PaxDb" id="10090-ENSMUSP00000097599"/>
<dbReference type="PeptideAtlas" id="O35954"/>
<dbReference type="ProteomicsDB" id="288171"/>
<dbReference type="Pumba" id="O35954"/>
<dbReference type="Antibodypedia" id="30438">
    <property type="antibodies" value="223 antibodies from 27 providers"/>
</dbReference>
<dbReference type="DNASU" id="18739"/>
<dbReference type="Ensembl" id="ENSMUST00000049658.14">
    <property type="protein sequence ID" value="ENSMUSP00000054309.8"/>
    <property type="gene ID" value="ENSMUSG00000024851.15"/>
</dbReference>
<dbReference type="Ensembl" id="ENSMUST00000100022.4">
    <property type="protein sequence ID" value="ENSMUSP00000097599.4"/>
    <property type="gene ID" value="ENSMUSG00000024851.15"/>
</dbReference>
<dbReference type="GeneID" id="18739"/>
<dbReference type="KEGG" id="mmu:18739"/>
<dbReference type="UCSC" id="uc008fyn.3">
    <property type="organism name" value="mouse"/>
</dbReference>
<dbReference type="AGR" id="MGI:1197524"/>
<dbReference type="CTD" id="9600"/>
<dbReference type="MGI" id="MGI:1197524">
    <property type="gene designation" value="Pitpnm1"/>
</dbReference>
<dbReference type="VEuPathDB" id="HostDB:ENSMUSG00000024851"/>
<dbReference type="eggNOG" id="KOG3668">
    <property type="taxonomic scope" value="Eukaryota"/>
</dbReference>
<dbReference type="GeneTree" id="ENSGT00940000161522"/>
<dbReference type="HOGENOM" id="CLU_007179_0_0_1"/>
<dbReference type="InParanoid" id="O35954"/>
<dbReference type="OMA" id="EKVDIHM"/>
<dbReference type="OrthoDB" id="10053061at2759"/>
<dbReference type="PhylomeDB" id="O35954"/>
<dbReference type="TreeFam" id="TF312967"/>
<dbReference type="Reactome" id="R-MMU-1483226">
    <property type="pathway name" value="Synthesis of PI"/>
</dbReference>
<dbReference type="BioGRID-ORCS" id="18739">
    <property type="hits" value="5 hits in 79 CRISPR screens"/>
</dbReference>
<dbReference type="CD-CODE" id="CE726F99">
    <property type="entry name" value="Postsynaptic density"/>
</dbReference>
<dbReference type="ChiTaRS" id="Pitpnm1">
    <property type="organism name" value="mouse"/>
</dbReference>
<dbReference type="PRO" id="PR:O35954"/>
<dbReference type="Proteomes" id="UP000000589">
    <property type="component" value="Chromosome 19"/>
</dbReference>
<dbReference type="RNAct" id="O35954">
    <property type="molecule type" value="protein"/>
</dbReference>
<dbReference type="Bgee" id="ENSMUSG00000024851">
    <property type="expression patterns" value="Expressed in layer of retina and 92 other cell types or tissues"/>
</dbReference>
<dbReference type="ExpressionAtlas" id="O35954">
    <property type="expression patterns" value="baseline and differential"/>
</dbReference>
<dbReference type="GO" id="GO:0044297">
    <property type="term" value="C:cell body"/>
    <property type="evidence" value="ECO:0000250"/>
    <property type="project" value="UniProtKB"/>
</dbReference>
<dbReference type="GO" id="GO:0032154">
    <property type="term" value="C:cleavage furrow"/>
    <property type="evidence" value="ECO:0007669"/>
    <property type="project" value="UniProtKB-SubCell"/>
</dbReference>
<dbReference type="GO" id="GO:0005829">
    <property type="term" value="C:cytosol"/>
    <property type="evidence" value="ECO:0007669"/>
    <property type="project" value="Ensembl"/>
</dbReference>
<dbReference type="GO" id="GO:0005789">
    <property type="term" value="C:endoplasmic reticulum membrane"/>
    <property type="evidence" value="ECO:0007669"/>
    <property type="project" value="UniProtKB-SubCell"/>
</dbReference>
<dbReference type="GO" id="GO:0032580">
    <property type="term" value="C:Golgi cisterna membrane"/>
    <property type="evidence" value="ECO:0007669"/>
    <property type="project" value="UniProtKB-SubCell"/>
</dbReference>
<dbReference type="GO" id="GO:0005811">
    <property type="term" value="C:lipid droplet"/>
    <property type="evidence" value="ECO:0007669"/>
    <property type="project" value="UniProtKB-SubCell"/>
</dbReference>
<dbReference type="GO" id="GO:0030496">
    <property type="term" value="C:midbody"/>
    <property type="evidence" value="ECO:0007669"/>
    <property type="project" value="UniProtKB-SubCell"/>
</dbReference>
<dbReference type="GO" id="GO:0005509">
    <property type="term" value="F:calcium ion binding"/>
    <property type="evidence" value="ECO:0007669"/>
    <property type="project" value="Ensembl"/>
</dbReference>
<dbReference type="GO" id="GO:0070300">
    <property type="term" value="F:phosphatidic acid binding"/>
    <property type="evidence" value="ECO:0007669"/>
    <property type="project" value="Ensembl"/>
</dbReference>
<dbReference type="GO" id="GO:0031210">
    <property type="term" value="F:phosphatidylcholine binding"/>
    <property type="evidence" value="ECO:0007669"/>
    <property type="project" value="Ensembl"/>
</dbReference>
<dbReference type="GO" id="GO:0035091">
    <property type="term" value="F:phosphatidylinositol binding"/>
    <property type="evidence" value="ECO:0007669"/>
    <property type="project" value="Ensembl"/>
</dbReference>
<dbReference type="GO" id="GO:0008526">
    <property type="term" value="F:phosphatidylinositol transfer activity"/>
    <property type="evidence" value="ECO:0000250"/>
    <property type="project" value="UniProtKB"/>
</dbReference>
<dbReference type="GO" id="GO:0005543">
    <property type="term" value="F:phospholipid binding"/>
    <property type="evidence" value="ECO:0000247"/>
    <property type="project" value="MGI"/>
</dbReference>
<dbReference type="GO" id="GO:0030971">
    <property type="term" value="F:receptor tyrosine kinase binding"/>
    <property type="evidence" value="ECO:0007669"/>
    <property type="project" value="Ensembl"/>
</dbReference>
<dbReference type="GO" id="GO:0015031">
    <property type="term" value="P:protein transport"/>
    <property type="evidence" value="ECO:0007669"/>
    <property type="project" value="UniProtKB-KW"/>
</dbReference>
<dbReference type="CDD" id="cd08889">
    <property type="entry name" value="SRPBCC_PITPNM1-2_like"/>
    <property type="match status" value="1"/>
</dbReference>
<dbReference type="FunFam" id="3.40.50.1000:FF:000173">
    <property type="entry name" value="Membrane-associated phosphatidylinositol transfer protein 2"/>
    <property type="match status" value="1"/>
</dbReference>
<dbReference type="FunFam" id="3.30.530.20:FF:000001">
    <property type="entry name" value="Phosphatidylinositol transfer protein membrane associated 2"/>
    <property type="match status" value="1"/>
</dbReference>
<dbReference type="Gene3D" id="3.30.530.20">
    <property type="match status" value="1"/>
</dbReference>
<dbReference type="Gene3D" id="3.40.50.1000">
    <property type="entry name" value="HAD superfamily/HAD-like"/>
    <property type="match status" value="1"/>
</dbReference>
<dbReference type="InterPro" id="IPR004177">
    <property type="entry name" value="DDHD_dom"/>
</dbReference>
<dbReference type="InterPro" id="IPR036412">
    <property type="entry name" value="HAD-like_sf"/>
</dbReference>
<dbReference type="InterPro" id="IPR023214">
    <property type="entry name" value="HAD_sf"/>
</dbReference>
<dbReference type="InterPro" id="IPR031315">
    <property type="entry name" value="LNS2/PITP"/>
</dbReference>
<dbReference type="InterPro" id="IPR001666">
    <property type="entry name" value="PI_transfer"/>
</dbReference>
<dbReference type="InterPro" id="IPR055261">
    <property type="entry name" value="PI_transfer_N"/>
</dbReference>
<dbReference type="InterPro" id="IPR023393">
    <property type="entry name" value="START-like_dom_sf"/>
</dbReference>
<dbReference type="PANTHER" id="PTHR10658:SF40">
    <property type="entry name" value="MEMBRANE-ASSOCIATED PHOSPHATIDYLINOSITOL TRANSFER PROTEIN 1"/>
    <property type="match status" value="1"/>
</dbReference>
<dbReference type="PANTHER" id="PTHR10658">
    <property type="entry name" value="PHOSPHATIDYLINOSITOL TRANSFER PROTEIN"/>
    <property type="match status" value="1"/>
</dbReference>
<dbReference type="Pfam" id="PF02862">
    <property type="entry name" value="DDHD"/>
    <property type="match status" value="2"/>
</dbReference>
<dbReference type="Pfam" id="PF02121">
    <property type="entry name" value="IP_trans"/>
    <property type="match status" value="1"/>
</dbReference>
<dbReference type="Pfam" id="PF24694">
    <property type="entry name" value="LNS2_PITM1-3"/>
    <property type="match status" value="1"/>
</dbReference>
<dbReference type="Pfam" id="PF24695">
    <property type="entry name" value="PITM1-3"/>
    <property type="match status" value="1"/>
</dbReference>
<dbReference type="PRINTS" id="PR00391">
    <property type="entry name" value="PITRANSFER"/>
</dbReference>
<dbReference type="SMART" id="SM01127">
    <property type="entry name" value="DDHD"/>
    <property type="match status" value="1"/>
</dbReference>
<dbReference type="SMART" id="SM00775">
    <property type="entry name" value="LNS2"/>
    <property type="match status" value="1"/>
</dbReference>
<dbReference type="SUPFAM" id="SSF55961">
    <property type="entry name" value="Bet v1-like"/>
    <property type="match status" value="1"/>
</dbReference>
<dbReference type="SUPFAM" id="SSF56784">
    <property type="entry name" value="HAD-like"/>
    <property type="match status" value="1"/>
</dbReference>
<dbReference type="PROSITE" id="PS51043">
    <property type="entry name" value="DDHD"/>
    <property type="match status" value="1"/>
</dbReference>
<keyword id="KW-0106">Calcium</keyword>
<keyword id="KW-0963">Cytoplasm</keyword>
<keyword id="KW-0256">Endoplasmic reticulum</keyword>
<keyword id="KW-0333">Golgi apparatus</keyword>
<keyword id="KW-0551">Lipid droplet</keyword>
<keyword id="KW-0472">Membrane</keyword>
<keyword id="KW-0479">Metal-binding</keyword>
<keyword id="KW-0488">Methylation</keyword>
<keyword id="KW-0597">Phosphoprotein</keyword>
<keyword id="KW-0653">Protein transport</keyword>
<keyword id="KW-1185">Reference proteome</keyword>
<keyword id="KW-0813">Transport</keyword>
<organism>
    <name type="scientific">Mus musculus</name>
    <name type="common">Mouse</name>
    <dbReference type="NCBI Taxonomy" id="10090"/>
    <lineage>
        <taxon>Eukaryota</taxon>
        <taxon>Metazoa</taxon>
        <taxon>Chordata</taxon>
        <taxon>Craniata</taxon>
        <taxon>Vertebrata</taxon>
        <taxon>Euteleostomi</taxon>
        <taxon>Mammalia</taxon>
        <taxon>Eutheria</taxon>
        <taxon>Euarchontoglires</taxon>
        <taxon>Glires</taxon>
        <taxon>Rodentia</taxon>
        <taxon>Myomorpha</taxon>
        <taxon>Muroidea</taxon>
        <taxon>Muridae</taxon>
        <taxon>Murinae</taxon>
        <taxon>Mus</taxon>
        <taxon>Mus</taxon>
    </lineage>
</organism>
<proteinExistence type="evidence at protein level"/>
<sequence>MLIKEYHILLPMSLDEYQVAQLYMIQKKSREESSGEGSGVEILANRPYTDGPGGNGQYTHKVYHVGSHIPGWFRALLPKAALQVEEESWNAYPYTRTRYTCPFVEKFSIEIETYYLPDGGQQPNVFNLSGAERRQRIVDTIDIVRDAVAPGEYKAEEDPRLYRSAKTGRGPLADDWARTAAQTGPLMCAYKLCKVEFRYWGMQAKIEQFIHDVGLRRVMLRAHRQAWCWQDEWIELSMADIRALEEETARMLAQRMAKCNTGSEGPEAQTPGKSSTEARPGTSTAGTPDGPEAPPGPDASPDASFGKQWSSSSRSSYSSQHGGGVSPQSLSEWRMQNIARDSENSSEEEFFDAHEGFSDSDEVFPKEMTKWNSNDFIDAFASPTEVEGVPDPTVMATKGIEDGARAPRDSEGLDGAGDLVVEACSVHALFLILHSGSILDSGPGDTNSKQADVQTLSTAFEAVTRVHFPEALGHVALRLVPCPPICAAAYALVSNLSPYSHDGDSLSRSQDHIPLAALPLLATSSSRYQGAVATVIARTNQAYAAFLRSSEGTGFCGQVVLIGDGVGGILGFDALCHSASAGPGSRGSSRRGSMNNEMLSPEVGPVRDPLADGVEVLGRASPEPSALPAQRTFSDMANPDPDGSQNSLQVASTATSSGEPRRASTASCPPASSEAPDGPTNAARLDFKVSGFFLFGSPLGLVLALRKTVMPALEVAQLRPACEQIYNLFHAADPCASRLEPLLAPKFQAIAPLAVPRYQKFPLGDGSSLLLADTLQTHSSLFLEELEMMVPSTPTSASGAFWKGSELGNEPASQTAAPSTTSEVVKILDRWWGNKRIDYSLYCPEALTAFPTVTLPHLFHASYWESADVVAFILRQVIEKERPQLTECEEPSIYSPAFPREKWQRKRTQVKIRNVTSNHRASDTVVCEGRPQVLNGRFMYGPLDVVTLTGEKVDVYVMTQPLSGKWIHFGTEVTNSSGRLTFPVPSERALGIGVYPVRMVVRGDHTYAECCLTVVSRGTEAVVFSIDGSFTASVSIMGSDPKVRAGAVDVVRHWQDSGYLIVYVTGRPDMQKHRVVAWLSQHNFPHGVVSFCDGLTHDPLRQKAMFLQSLVQEVELNIVAGYGSPKDVAVYAALGLSPSQTYIVGRAVRKLQAQCQFLSDGYVAHLGQLEAGSHSHAPSGPPRAALAKSSYAVAAPVDFLRKQSQLLRSRGPSQVDREGPGTPPTTLARGKTRSISLKLDSEE</sequence>
<gene>
    <name type="primary">Pitpnm1</name>
    <name type="synonym">Dres9</name>
    <name type="synonym">Mpt1</name>
    <name type="synonym">Nir2</name>
    <name type="synonym">Pitpnm</name>
</gene>
<reference key="1">
    <citation type="journal article" date="1997" name="Biochem. Biophys. Res. Commun.">
        <title>Molecular cloning and characterization of mammalian homologues of the Drosophila retinal degeneration B gene.</title>
        <authorList>
            <person name="Aikawa Y."/>
            <person name="Hara H."/>
            <person name="Watanabe T."/>
        </authorList>
    </citation>
    <scope>NUCLEOTIDE SEQUENCE [MRNA]</scope>
    <scope>TISSUE SPECIFICITY</scope>
    <source>
        <strain>BALB/cJ</strain>
        <tissue>Brain</tissue>
    </source>
</reference>
<reference key="2">
    <citation type="journal article" date="1997" name="Genes Funct.">
        <title>A mammalian homologue of the Drosophila retinal degeneration B gene: implications for the evolution of phototransduction mechanisms.</title>
        <authorList>
            <person name="Rubboli F."/>
            <person name="Bulfone A."/>
            <person name="Bogni S."/>
            <person name="Marchitiello A."/>
            <person name="Zollo M."/>
            <person name="Borsani G."/>
            <person name="Ballabio A."/>
            <person name="Banfi S."/>
        </authorList>
    </citation>
    <scope>NUCLEOTIDE SEQUENCE [MRNA]</scope>
    <scope>TISSUE SPECIFICITY</scope>
    <source>
        <tissue>Retina</tissue>
    </source>
</reference>
<reference key="3">
    <citation type="journal article" date="2004" name="Genome Res.">
        <title>The status, quality, and expansion of the NIH full-length cDNA project: the Mammalian Gene Collection (MGC).</title>
        <authorList>
            <consortium name="The MGC Project Team"/>
        </authorList>
    </citation>
    <scope>NUCLEOTIDE SEQUENCE [LARGE SCALE MRNA]</scope>
    <source>
        <strain>C57BL/6J</strain>
        <tissue>Brain</tissue>
        <tissue>Eye</tissue>
    </source>
</reference>
<reference key="4">
    <citation type="journal article" date="1999" name="J. Biol. Chem.">
        <title>Involvement of PITPnm, a mammalian homologue of Drosophila rdgB, in phosphoinositide synthesis on Golgi membranes.</title>
        <authorList>
            <person name="Aikawa Y."/>
            <person name="Kuraoka A."/>
            <person name="Kondo H."/>
            <person name="Kawabuchi M."/>
            <person name="Watanabe T."/>
        </authorList>
    </citation>
    <scope>FUNCTION</scope>
    <scope>SUBCELLULAR LOCATION</scope>
    <scope>INTERACTION WITH PIK4CA</scope>
</reference>
<reference key="5">
    <citation type="journal article" date="2010" name="Cell">
        <title>A tissue-specific atlas of mouse protein phosphorylation and expression.</title>
        <authorList>
            <person name="Huttlin E.L."/>
            <person name="Jedrychowski M.P."/>
            <person name="Elias J.E."/>
            <person name="Goswami T."/>
            <person name="Rad R."/>
            <person name="Beausoleil S.A."/>
            <person name="Villen J."/>
            <person name="Haas W."/>
            <person name="Sowa M.E."/>
            <person name="Gygi S.P."/>
        </authorList>
    </citation>
    <scope>PHOSPHORYLATION [LARGE SCALE ANALYSIS] AT THR-282; THR-287; SER-300; SER-304; SER-319; SER-326; SER-329; SER-373 AND SER-593</scope>
    <scope>IDENTIFICATION BY MASS SPECTROMETRY [LARGE SCALE ANALYSIS]</scope>
    <source>
        <tissue>Brain</tissue>
        <tissue>Brown adipose tissue</tissue>
        <tissue>Kidney</tissue>
        <tissue>Lung</tissue>
        <tissue>Pancreas</tissue>
        <tissue>Spleen</tissue>
    </source>
</reference>
<reference key="6">
    <citation type="journal article" date="2014" name="Mol. Cell. Proteomics">
        <title>Immunoaffinity enrichment and mass spectrometry analysis of protein methylation.</title>
        <authorList>
            <person name="Guo A."/>
            <person name="Gu H."/>
            <person name="Zhou J."/>
            <person name="Mulhern D."/>
            <person name="Wang Y."/>
            <person name="Lee K.A."/>
            <person name="Yang V."/>
            <person name="Aguiar M."/>
            <person name="Kornhauser J."/>
            <person name="Jia X."/>
            <person name="Ren J."/>
            <person name="Beausoleil S.A."/>
            <person name="Silva J.C."/>
            <person name="Vemulapalli V."/>
            <person name="Bedford M.T."/>
            <person name="Comb M.J."/>
        </authorList>
    </citation>
    <scope>METHYLATION [LARGE SCALE ANALYSIS] AT ARG-1210 AND ARG-1217</scope>
    <scope>IDENTIFICATION BY MASS SPECTROMETRY [LARGE SCALE ANALYSIS]</scope>
    <source>
        <tissue>Brain</tissue>
    </source>
</reference>
<comment type="function">
    <text evidence="2 6">Catalyzes the transfer of phosphatidylinositol (PI) between membranes (By similarity). Binds PI (PubMed:10400687). Also binds phosphatidylcholine (PC) and phosphatidic acid (PA) with the binding affinity order of PI &gt; PA &gt; PC (By similarity). Regulates RHOA activity, and plays a role in cytoskeleton remodeling (By similarity). Necessary for normal completion of cytokinesis (By similarity). Plays a role in maintaining normal diacylglycerol levels in the Golgi apparatus (By similarity). Necessary for maintaining the normal structure of the endoplasmic reticulum and the Golgi apparatus (By similarity). Required for protein export from the endoplasmic reticulum and the Golgi (By similarity). Binds calcium ions (By similarity).</text>
</comment>
<comment type="catalytic activity">
    <reaction evidence="2">
        <text>a 1,2-diacyl-sn-glycero-3-phospho-(1D-myo-inositol)(in) = a 1,2-diacyl-sn-glycero-3-phospho-(1D-myo-inositol)(out)</text>
        <dbReference type="Rhea" id="RHEA:38691"/>
        <dbReference type="ChEBI" id="CHEBI:57880"/>
    </reaction>
    <physiologicalReaction direction="left-to-right" evidence="2">
        <dbReference type="Rhea" id="RHEA:38692"/>
    </physiologicalReaction>
</comment>
<comment type="subunit">
    <text evidence="1">Interacts with PTK2B via its C-terminus. Interacts with RHOA. Has higher affinity for the inactive, GDP-bound form of RHOA. The CDK1-phosphorylated form interacts with PLK1. Interacts with VAPB and PIK4CA (By similarity).</text>
</comment>
<comment type="subcellular location">
    <subcellularLocation>
        <location evidence="2">Cytoplasm</location>
    </subcellularLocation>
    <subcellularLocation>
        <location evidence="2">Golgi apparatus</location>
        <location evidence="2">Golgi stack membrane</location>
        <topology evidence="2">Peripheral membrane protein</topology>
    </subcellularLocation>
    <subcellularLocation>
        <location evidence="2">Endoplasmic reticulum membrane</location>
        <topology evidence="2">Peripheral membrane protein</topology>
    </subcellularLocation>
    <subcellularLocation>
        <location evidence="2">Lipid droplet</location>
    </subcellularLocation>
    <subcellularLocation>
        <location evidence="2">Cleavage furrow</location>
    </subcellularLocation>
    <subcellularLocation>
        <location evidence="2">Midbody</location>
    </subcellularLocation>
    <text evidence="2">Peripheral membrane protein associated with Golgi stacks in interphase cells. A minor proportion is associated with the endoplasmic reticulum. Associated with lipid droplets. Dissociates from the Golgi early on in mitosis and localizes to the cleavage furrow and midbody during cytokinesis.</text>
</comment>
<comment type="tissue specificity">
    <text evidence="7 8">Detected at high levels in brain, and at lower levels in lung, kidney, spleen and liver (at protein level). Ubiquitous. Highly expressed in embryonic retina and the central nervous system.</text>
</comment>
<comment type="developmental stage">
    <text>Detected at low levels during fetal development up to day 15. Highly expressed at day 17.</text>
</comment>
<comment type="PTM">
    <text evidence="1">Phosphorylated on multiple sites by CDK1 at the onset of mitosis. Phosphorylation facilitates dissociation from the Golgi complex and is required for interaction with PLK1 (By similarity).</text>
</comment>
<comment type="PTM">
    <text evidence="1">Phosphorylated on threonine residues upon treatment with oleic acid.</text>
</comment>
<comment type="PTM">
    <text evidence="1">Phosphorylated on tyrosine residues by PTK2B.</text>
</comment>
<comment type="similarity">
    <text evidence="9">Belongs to the PtdIns transfer protein family. PI transfer class IIA subfamily.</text>
</comment>
<name>PITM1_MOUSE</name>
<accession>O35954</accession>
<protein>
    <recommendedName>
        <fullName>Membrane-associated phosphatidylinositol transfer protein 1</fullName>
    </recommendedName>
    <alternativeName>
        <fullName>Drosophila retinal degeneration B homolog 1</fullName>
        <shortName>RdgB1</shortName>
    </alternativeName>
    <alternativeName>
        <fullName>Mpt-1</fullName>
    </alternativeName>
    <alternativeName>
        <fullName>Phosphatidylinositol transfer protein, membrane-associated 1</fullName>
        <shortName>PITPnm 1</shortName>
    </alternativeName>
    <alternativeName>
        <fullName>Pyk2 N-terminal domain-interacting receptor 2</fullName>
        <shortName>NIR-2</shortName>
    </alternativeName>
</protein>
<evidence type="ECO:0000250" key="1"/>
<evidence type="ECO:0000250" key="2">
    <source>
        <dbReference type="UniProtKB" id="O00562"/>
    </source>
</evidence>
<evidence type="ECO:0000250" key="3">
    <source>
        <dbReference type="UniProtKB" id="Q5U2N3"/>
    </source>
</evidence>
<evidence type="ECO:0000255" key="4">
    <source>
        <dbReference type="PROSITE-ProRule" id="PRU00378"/>
    </source>
</evidence>
<evidence type="ECO:0000256" key="5">
    <source>
        <dbReference type="SAM" id="MobiDB-lite"/>
    </source>
</evidence>
<evidence type="ECO:0000269" key="6">
    <source>
    </source>
</evidence>
<evidence type="ECO:0000269" key="7">
    <source>
    </source>
</evidence>
<evidence type="ECO:0000269" key="8">
    <source>
    </source>
</evidence>
<evidence type="ECO:0000305" key="9"/>
<evidence type="ECO:0007744" key="10">
    <source>
    </source>
</evidence>
<evidence type="ECO:0007744" key="11">
    <source>
    </source>
</evidence>